<proteinExistence type="evidence at protein level"/>
<organism>
    <name type="scientific">Rhyparobia maderae</name>
    <name type="common">Madeira cockroach</name>
    <name type="synonym">Leucophaea maderae</name>
    <dbReference type="NCBI Taxonomy" id="36963"/>
    <lineage>
        <taxon>Eukaryota</taxon>
        <taxon>Metazoa</taxon>
        <taxon>Ecdysozoa</taxon>
        <taxon>Arthropoda</taxon>
        <taxon>Hexapoda</taxon>
        <taxon>Insecta</taxon>
        <taxon>Pterygota</taxon>
        <taxon>Neoptera</taxon>
        <taxon>Polyneoptera</taxon>
        <taxon>Dictyoptera</taxon>
        <taxon>Blattodea</taxon>
        <taxon>Blaberoidea</taxon>
        <taxon>Blaberidae</taxon>
        <taxon>Oxyhaloinae</taxon>
        <taxon>Rhyparobia</taxon>
    </lineage>
</organism>
<protein>
    <recommendedName>
        <fullName>Periviscerokinin-1</fullName>
        <shortName>Lem-PVK-1</shortName>
        <shortName>RhyMa-PVK-1</shortName>
    </recommendedName>
</protein>
<name>PVK1_RHYMA</name>
<feature type="peptide" id="PRO_0000044246" description="Periviscerokinin-1">
    <location>
        <begin position="1"/>
        <end position="11"/>
    </location>
</feature>
<feature type="modified residue" description="Threonine amide" evidence="1 2">
    <location>
        <position position="11"/>
    </location>
</feature>
<evidence type="ECO:0000269" key="1">
    <source>
    </source>
</evidence>
<evidence type="ECO:0000269" key="2">
    <source>
    </source>
</evidence>
<evidence type="ECO:0000305" key="3"/>
<accession>P83921</accession>
<accession>P82698</accession>
<accession>P85766</accession>
<sequence>GSSGLIPFGRT</sequence>
<comment type="function">
    <text evidence="1">Mediates visceral muscle contractile activity (myotropic activity).</text>
</comment>
<comment type="subcellular location">
    <subcellularLocation>
        <location>Secreted</location>
    </subcellularLocation>
</comment>
<comment type="mass spectrometry"/>
<comment type="similarity">
    <text evidence="3">Belongs to the periviscerokinin family.</text>
</comment>
<reference key="1">
    <citation type="journal article" date="2000" name="Eur. J. Biochem.">
        <title>Identification of novel periviscerokinins from single neurohaemal release sites in insects. MS/MS fragmentation complemented by Edman degradation.</title>
        <authorList>
            <person name="Predel R."/>
            <person name="Kellner R."/>
            <person name="Baggerman G."/>
            <person name="Steinmetzer T."/>
            <person name="Schoofs L."/>
        </authorList>
    </citation>
    <scope>PROTEIN SEQUENCE</scope>
    <scope>FUNCTION</scope>
    <scope>MASS SPECTROMETRY</scope>
    <scope>AMIDATION AT THR-11</scope>
    <source>
        <tissue>Abdominal perisympathetic organs</tissue>
    </source>
</reference>
<reference key="2">
    <citation type="journal article" date="2009" name="BMC Evol. Biol.">
        <title>A proteomic approach for studying insect phylogeny: CAPA peptides of ancient insect taxa (Dictyoptera, Blattoptera) as a test case.</title>
        <authorList>
            <person name="Roth S."/>
            <person name="Fromm B."/>
            <person name="Gaede G."/>
            <person name="Predel R."/>
        </authorList>
    </citation>
    <scope>PROTEIN SEQUENCE</scope>
    <scope>AMIDATION AT THR-11</scope>
    <source>
        <tissue>Abdominal perisympathetic organs</tissue>
    </source>
</reference>
<keyword id="KW-0027">Amidation</keyword>
<keyword id="KW-0903">Direct protein sequencing</keyword>
<keyword id="KW-0527">Neuropeptide</keyword>
<keyword id="KW-0964">Secreted</keyword>
<dbReference type="GO" id="GO:0005576">
    <property type="term" value="C:extracellular region"/>
    <property type="evidence" value="ECO:0007669"/>
    <property type="project" value="UniProtKB-SubCell"/>
</dbReference>
<dbReference type="GO" id="GO:0007218">
    <property type="term" value="P:neuropeptide signaling pathway"/>
    <property type="evidence" value="ECO:0007669"/>
    <property type="project" value="UniProtKB-KW"/>
</dbReference>
<dbReference type="InterPro" id="IPR013231">
    <property type="entry name" value="Periviscerokinin"/>
</dbReference>
<dbReference type="Pfam" id="PF08259">
    <property type="entry name" value="Periviscerokin"/>
    <property type="match status" value="1"/>
</dbReference>